<gene>
    <name evidence="1" type="primary">rpoC1</name>
    <name type="ordered locus">CYA_0410</name>
</gene>
<name>RPOC1_SYNJA</name>
<accession>Q2JQT5</accession>
<keyword id="KW-0240">DNA-directed RNA polymerase</keyword>
<keyword id="KW-0460">Magnesium</keyword>
<keyword id="KW-0479">Metal-binding</keyword>
<keyword id="KW-0548">Nucleotidyltransferase</keyword>
<keyword id="KW-0804">Transcription</keyword>
<keyword id="KW-0808">Transferase</keyword>
<keyword id="KW-0862">Zinc</keyword>
<comment type="function">
    <text evidence="1">DNA-dependent RNA polymerase catalyzes the transcription of DNA into RNA using the four ribonucleoside triphosphates as substrates.</text>
</comment>
<comment type="catalytic activity">
    <reaction evidence="1">
        <text>RNA(n) + a ribonucleoside 5'-triphosphate = RNA(n+1) + diphosphate</text>
        <dbReference type="Rhea" id="RHEA:21248"/>
        <dbReference type="Rhea" id="RHEA-COMP:14527"/>
        <dbReference type="Rhea" id="RHEA-COMP:17342"/>
        <dbReference type="ChEBI" id="CHEBI:33019"/>
        <dbReference type="ChEBI" id="CHEBI:61557"/>
        <dbReference type="ChEBI" id="CHEBI:140395"/>
        <dbReference type="EC" id="2.7.7.6"/>
    </reaction>
</comment>
<comment type="cofactor">
    <cofactor evidence="1">
        <name>Mg(2+)</name>
        <dbReference type="ChEBI" id="CHEBI:18420"/>
    </cofactor>
    <text evidence="1">Binds 1 Mg(2+) ion per subunit.</text>
</comment>
<comment type="cofactor">
    <cofactor evidence="1">
        <name>Zn(2+)</name>
        <dbReference type="ChEBI" id="CHEBI:29105"/>
    </cofactor>
    <text evidence="1">Binds 1 Zn(2+) ion per subunit.</text>
</comment>
<comment type="subunit">
    <text evidence="1">In cyanobacteria the RNAP catalytic core is composed of 2 alpha, 1 beta, 1 beta', 1 gamma and 1 omega subunit. When a sigma factor is associated with the core the holoenzyme is formed, which can initiate transcription.</text>
</comment>
<comment type="similarity">
    <text evidence="1">Belongs to the RNA polymerase beta' chain family. RpoC1 subfamily.</text>
</comment>
<protein>
    <recommendedName>
        <fullName evidence="1">DNA-directed RNA polymerase subunit gamma</fullName>
        <shortName evidence="1">RNAP subunit gamma</shortName>
        <ecNumber evidence="1">2.7.7.6</ecNumber>
    </recommendedName>
    <alternativeName>
        <fullName evidence="1">RNA polymerase subunit gamma</fullName>
    </alternativeName>
    <alternativeName>
        <fullName evidence="1">Transcriptase subunit gamma</fullName>
    </alternativeName>
</protein>
<dbReference type="EC" id="2.7.7.6" evidence="1"/>
<dbReference type="EMBL" id="CP000239">
    <property type="protein sequence ID" value="ABC98629.1"/>
    <property type="molecule type" value="Genomic_DNA"/>
</dbReference>
<dbReference type="RefSeq" id="WP_011429318.1">
    <property type="nucleotide sequence ID" value="NC_007775.1"/>
</dbReference>
<dbReference type="SMR" id="Q2JQT5"/>
<dbReference type="STRING" id="321327.CYA_0410"/>
<dbReference type="KEGG" id="cya:CYA_0410"/>
<dbReference type="eggNOG" id="COG0086">
    <property type="taxonomic scope" value="Bacteria"/>
</dbReference>
<dbReference type="HOGENOM" id="CLU_030022_2_0_3"/>
<dbReference type="OrthoDB" id="9815296at2"/>
<dbReference type="Proteomes" id="UP000008818">
    <property type="component" value="Chromosome"/>
</dbReference>
<dbReference type="GO" id="GO:0000428">
    <property type="term" value="C:DNA-directed RNA polymerase complex"/>
    <property type="evidence" value="ECO:0007669"/>
    <property type="project" value="UniProtKB-KW"/>
</dbReference>
<dbReference type="GO" id="GO:0003677">
    <property type="term" value="F:DNA binding"/>
    <property type="evidence" value="ECO:0007669"/>
    <property type="project" value="UniProtKB-UniRule"/>
</dbReference>
<dbReference type="GO" id="GO:0003899">
    <property type="term" value="F:DNA-directed RNA polymerase activity"/>
    <property type="evidence" value="ECO:0007669"/>
    <property type="project" value="UniProtKB-UniRule"/>
</dbReference>
<dbReference type="GO" id="GO:0000287">
    <property type="term" value="F:magnesium ion binding"/>
    <property type="evidence" value="ECO:0007669"/>
    <property type="project" value="UniProtKB-UniRule"/>
</dbReference>
<dbReference type="GO" id="GO:0008270">
    <property type="term" value="F:zinc ion binding"/>
    <property type="evidence" value="ECO:0007669"/>
    <property type="project" value="UniProtKB-UniRule"/>
</dbReference>
<dbReference type="GO" id="GO:0006351">
    <property type="term" value="P:DNA-templated transcription"/>
    <property type="evidence" value="ECO:0007669"/>
    <property type="project" value="UniProtKB-UniRule"/>
</dbReference>
<dbReference type="Gene3D" id="1.10.40.90">
    <property type="match status" value="1"/>
</dbReference>
<dbReference type="Gene3D" id="2.40.40.20">
    <property type="match status" value="1"/>
</dbReference>
<dbReference type="Gene3D" id="4.10.860.120">
    <property type="entry name" value="RNA polymerase II, clamp domain"/>
    <property type="match status" value="1"/>
</dbReference>
<dbReference type="Gene3D" id="1.10.274.100">
    <property type="entry name" value="RNA polymerase Rpb1, domain 3"/>
    <property type="match status" value="1"/>
</dbReference>
<dbReference type="HAMAP" id="MF_01323">
    <property type="entry name" value="RNApol_bact_RpoC1"/>
    <property type="match status" value="1"/>
</dbReference>
<dbReference type="InterPro" id="IPR012755">
    <property type="entry name" value="DNA-dir_RpoC1_gamma"/>
</dbReference>
<dbReference type="InterPro" id="IPR045867">
    <property type="entry name" value="DNA-dir_RpoC_beta_prime"/>
</dbReference>
<dbReference type="InterPro" id="IPR000722">
    <property type="entry name" value="RNA_pol_asu"/>
</dbReference>
<dbReference type="InterPro" id="IPR006592">
    <property type="entry name" value="RNA_pol_N"/>
</dbReference>
<dbReference type="InterPro" id="IPR007080">
    <property type="entry name" value="RNA_pol_Rpb1_1"/>
</dbReference>
<dbReference type="InterPro" id="IPR007066">
    <property type="entry name" value="RNA_pol_Rpb1_3"/>
</dbReference>
<dbReference type="InterPro" id="IPR042102">
    <property type="entry name" value="RNA_pol_Rpb1_3_sf"/>
</dbReference>
<dbReference type="InterPro" id="IPR044893">
    <property type="entry name" value="RNA_pol_Rpb1_clamp_domain"/>
</dbReference>
<dbReference type="InterPro" id="IPR034678">
    <property type="entry name" value="RNApol_RpoC1"/>
</dbReference>
<dbReference type="NCBIfam" id="NF002729">
    <property type="entry name" value="PRK02625.1"/>
    <property type="match status" value="1"/>
</dbReference>
<dbReference type="NCBIfam" id="TIGR02387">
    <property type="entry name" value="rpoC1_cyan"/>
    <property type="match status" value="1"/>
</dbReference>
<dbReference type="PANTHER" id="PTHR19376">
    <property type="entry name" value="DNA-DIRECTED RNA POLYMERASE"/>
    <property type="match status" value="1"/>
</dbReference>
<dbReference type="PANTHER" id="PTHR19376:SF54">
    <property type="entry name" value="DNA-DIRECTED RNA POLYMERASE SUBUNIT BETA"/>
    <property type="match status" value="1"/>
</dbReference>
<dbReference type="Pfam" id="PF04997">
    <property type="entry name" value="RNA_pol_Rpb1_1"/>
    <property type="match status" value="1"/>
</dbReference>
<dbReference type="Pfam" id="PF00623">
    <property type="entry name" value="RNA_pol_Rpb1_2"/>
    <property type="match status" value="2"/>
</dbReference>
<dbReference type="Pfam" id="PF04983">
    <property type="entry name" value="RNA_pol_Rpb1_3"/>
    <property type="match status" value="1"/>
</dbReference>
<dbReference type="SMART" id="SM00663">
    <property type="entry name" value="RPOLA_N"/>
    <property type="match status" value="1"/>
</dbReference>
<dbReference type="SUPFAM" id="SSF64484">
    <property type="entry name" value="beta and beta-prime subunits of DNA dependent RNA-polymerase"/>
    <property type="match status" value="1"/>
</dbReference>
<feature type="chain" id="PRO_1000067557" description="DNA-directed RNA polymerase subunit gamma">
    <location>
        <begin position="1"/>
        <end position="627"/>
    </location>
</feature>
<feature type="binding site" evidence="1">
    <location>
        <position position="70"/>
    </location>
    <ligand>
        <name>Zn(2+)</name>
        <dbReference type="ChEBI" id="CHEBI:29105"/>
    </ligand>
</feature>
<feature type="binding site" evidence="1">
    <location>
        <position position="72"/>
    </location>
    <ligand>
        <name>Zn(2+)</name>
        <dbReference type="ChEBI" id="CHEBI:29105"/>
    </ligand>
</feature>
<feature type="binding site" evidence="1">
    <location>
        <position position="85"/>
    </location>
    <ligand>
        <name>Zn(2+)</name>
        <dbReference type="ChEBI" id="CHEBI:29105"/>
    </ligand>
</feature>
<feature type="binding site" evidence="1">
    <location>
        <position position="88"/>
    </location>
    <ligand>
        <name>Zn(2+)</name>
        <dbReference type="ChEBI" id="CHEBI:29105"/>
    </ligand>
</feature>
<feature type="binding site" evidence="1">
    <location>
        <position position="468"/>
    </location>
    <ligand>
        <name>Mg(2+)</name>
        <dbReference type="ChEBI" id="CHEBI:18420"/>
    </ligand>
</feature>
<feature type="binding site" evidence="1">
    <location>
        <position position="470"/>
    </location>
    <ligand>
        <name>Mg(2+)</name>
        <dbReference type="ChEBI" id="CHEBI:18420"/>
    </ligand>
</feature>
<feature type="binding site" evidence="1">
    <location>
        <position position="472"/>
    </location>
    <ligand>
        <name>Mg(2+)</name>
        <dbReference type="ChEBI" id="CHEBI:18420"/>
    </ligand>
</feature>
<reference key="1">
    <citation type="journal article" date="2007" name="ISME J.">
        <title>Population level functional diversity in a microbial community revealed by comparative genomic and metagenomic analyses.</title>
        <authorList>
            <person name="Bhaya D."/>
            <person name="Grossman A.R."/>
            <person name="Steunou A.-S."/>
            <person name="Khuri N."/>
            <person name="Cohan F.M."/>
            <person name="Hamamura N."/>
            <person name="Melendrez M.C."/>
            <person name="Bateson M.M."/>
            <person name="Ward D.M."/>
            <person name="Heidelberg J.F."/>
        </authorList>
    </citation>
    <scope>NUCLEOTIDE SEQUENCE [LARGE SCALE GENOMIC DNA]</scope>
    <source>
        <strain>JA-3-3Ab</strain>
    </source>
</reference>
<proteinExistence type="inferred from homology"/>
<sequence length="627" mass="71252">MAKTEQRFDYVKIGLASPERIIEWGQRTLPNGQVVGEVTKPETINYRTLKPEMDGLFCERIFGPVKDWECHCGKYKRVRHRGIVCERCGVEVTESRVRRHRMGYIKLAAPVTHVWYLKGIPSHIATLLDMPLRDVEQVVYFNAYVVVDPGNAPNLSYKQLLTEDQYLEIEDQMYEEGSELQLPENWAMIGAEAIERLLKDIDLEKEAEQLREEIASARGQKRARLIKRLRVIDNFIATGARPEWMVLRVLPVIPPDLRPMVQLDGGRFATSDLNDLYRRVINRNNRLARLQEIMAPEIIVRNEKRMLQEAVDALIDNGRRGRMVVGANNRPLKSLSDIIEGKQGRFRQNLLGKRVDYSGRSVIVVGPNLRMHQCGLPKEMAIELFQPFVIHKLIKRGIVNNIKAAKKLIQSNDPQVWDVLEDVIDGHPVLLNRAPTLHRLGIQAFEPILVEGRAIQLHPLVCPAFNADFDGDQMAVHVPLSLEAQAEARLLMLATNNILSPATGAPIITPSQDMVLGCYYLTADNPHAPDLGDRYFASLEDALIAYDRGVIGLHSKIWVRYSGPMELGKEEKESEPQIIEEPGGTRLKITNYRRIREDRDGNVISQYIRTTAGRIIFNKTVQDILSA</sequence>
<evidence type="ECO:0000255" key="1">
    <source>
        <dbReference type="HAMAP-Rule" id="MF_01323"/>
    </source>
</evidence>
<organism>
    <name type="scientific">Synechococcus sp. (strain JA-3-3Ab)</name>
    <name type="common">Cyanobacteria bacterium Yellowstone A-Prime</name>
    <dbReference type="NCBI Taxonomy" id="321327"/>
    <lineage>
        <taxon>Bacteria</taxon>
        <taxon>Bacillati</taxon>
        <taxon>Cyanobacteriota</taxon>
        <taxon>Cyanophyceae</taxon>
        <taxon>Synechococcales</taxon>
        <taxon>Synechococcaceae</taxon>
        <taxon>Synechococcus</taxon>
    </lineage>
</organism>